<protein>
    <recommendedName>
        <fullName evidence="1">Flagellar L-ring protein</fullName>
    </recommendedName>
    <alternativeName>
        <fullName evidence="1">Basal body L-ring protein</fullName>
    </alternativeName>
</protein>
<reference key="1">
    <citation type="journal article" date="2005" name="Nucleic Acids Res.">
        <title>The genome sequence of Salmonella enterica serovar Choleraesuis, a highly invasive and resistant zoonotic pathogen.</title>
        <authorList>
            <person name="Chiu C.-H."/>
            <person name="Tang P."/>
            <person name="Chu C."/>
            <person name="Hu S."/>
            <person name="Bao Q."/>
            <person name="Yu J."/>
            <person name="Chou Y.-Y."/>
            <person name="Wang H.-S."/>
            <person name="Lee Y.-S."/>
        </authorList>
    </citation>
    <scope>NUCLEOTIDE SEQUENCE [LARGE SCALE GENOMIC DNA]</scope>
    <source>
        <strain>SC-B67</strain>
    </source>
</reference>
<accession>Q57QH8</accession>
<evidence type="ECO:0000255" key="1">
    <source>
        <dbReference type="HAMAP-Rule" id="MF_00415"/>
    </source>
</evidence>
<evidence type="ECO:0000305" key="2"/>
<dbReference type="EMBL" id="AE017220">
    <property type="protein sequence ID" value="AAX65033.1"/>
    <property type="status" value="ALT_INIT"/>
    <property type="molecule type" value="Genomic_DNA"/>
</dbReference>
<dbReference type="RefSeq" id="WP_001174897.1">
    <property type="nucleotide sequence ID" value="NC_006905.1"/>
</dbReference>
<dbReference type="SMR" id="Q57QH8"/>
<dbReference type="KEGG" id="sec:SCH_1127"/>
<dbReference type="HOGENOM" id="CLU_069313_0_0_6"/>
<dbReference type="Proteomes" id="UP000000538">
    <property type="component" value="Chromosome"/>
</dbReference>
<dbReference type="GO" id="GO:0009427">
    <property type="term" value="C:bacterial-type flagellum basal body, distal rod, L ring"/>
    <property type="evidence" value="ECO:0007669"/>
    <property type="project" value="InterPro"/>
</dbReference>
<dbReference type="GO" id="GO:0009279">
    <property type="term" value="C:cell outer membrane"/>
    <property type="evidence" value="ECO:0007669"/>
    <property type="project" value="UniProtKB-SubCell"/>
</dbReference>
<dbReference type="GO" id="GO:0003774">
    <property type="term" value="F:cytoskeletal motor activity"/>
    <property type="evidence" value="ECO:0007669"/>
    <property type="project" value="InterPro"/>
</dbReference>
<dbReference type="GO" id="GO:0071973">
    <property type="term" value="P:bacterial-type flagellum-dependent cell motility"/>
    <property type="evidence" value="ECO:0007669"/>
    <property type="project" value="InterPro"/>
</dbReference>
<dbReference type="HAMAP" id="MF_00415">
    <property type="entry name" value="FlgH"/>
    <property type="match status" value="1"/>
</dbReference>
<dbReference type="InterPro" id="IPR000527">
    <property type="entry name" value="Flag_Lring"/>
</dbReference>
<dbReference type="NCBIfam" id="NF001301">
    <property type="entry name" value="PRK00249.1-1"/>
    <property type="match status" value="1"/>
</dbReference>
<dbReference type="PANTHER" id="PTHR34933">
    <property type="entry name" value="FLAGELLAR L-RING PROTEIN"/>
    <property type="match status" value="1"/>
</dbReference>
<dbReference type="PANTHER" id="PTHR34933:SF3">
    <property type="entry name" value="FLAGELLAR L-RING PROTEIN"/>
    <property type="match status" value="1"/>
</dbReference>
<dbReference type="Pfam" id="PF02107">
    <property type="entry name" value="FlgH"/>
    <property type="match status" value="1"/>
</dbReference>
<dbReference type="PRINTS" id="PR01008">
    <property type="entry name" value="FLGLRINGFLGH"/>
</dbReference>
<dbReference type="PROSITE" id="PS51257">
    <property type="entry name" value="PROKAR_LIPOPROTEIN"/>
    <property type="match status" value="1"/>
</dbReference>
<organism>
    <name type="scientific">Salmonella choleraesuis (strain SC-B67)</name>
    <dbReference type="NCBI Taxonomy" id="321314"/>
    <lineage>
        <taxon>Bacteria</taxon>
        <taxon>Pseudomonadati</taxon>
        <taxon>Pseudomonadota</taxon>
        <taxon>Gammaproteobacteria</taxon>
        <taxon>Enterobacterales</taxon>
        <taxon>Enterobacteriaceae</taxon>
        <taxon>Salmonella</taxon>
    </lineage>
</organism>
<sequence length="232" mass="24709">MQKYALHAYPVMALMVATLTGCAWIPAKPLVQGATTAQPIPGPVPVANGSIFQSAQPINYGYQPLFEDRRPRNIGDTLTIVLQENVSASKSSSANASRDGKTSFGFDTVPRYLQGLFGNSRADMEASGGNSFNGKGGANASNTFSGTLTVTVDQVLANGNLHVVGEKQIAINQGTEFIRFSGVVNPRTISGSNSVPSTQVADARIEYVGNGYINEAQNMGWLQRFFLNLSPM</sequence>
<comment type="function">
    <text evidence="1">Assembles around the rod to form the L-ring and probably protects the motor/basal body from shearing forces during rotation.</text>
</comment>
<comment type="subunit">
    <text evidence="1">The basal body constitutes a major portion of the flagellar organelle and consists of four rings (L,P,S, and M) mounted on a central rod.</text>
</comment>
<comment type="subcellular location">
    <subcellularLocation>
        <location evidence="1">Cell outer membrane</location>
        <topology evidence="1">Lipid-anchor</topology>
    </subcellularLocation>
    <subcellularLocation>
        <location evidence="1">Bacterial flagellum basal body</location>
    </subcellularLocation>
</comment>
<comment type="similarity">
    <text evidence="1">Belongs to the FlgH family.</text>
</comment>
<comment type="sequence caution" evidence="2">
    <conflict type="erroneous initiation">
        <sequence resource="EMBL-CDS" id="AAX65033"/>
    </conflict>
</comment>
<gene>
    <name evidence="1" type="primary">flgH</name>
    <name type="ordered locus">SCH_1127</name>
</gene>
<name>FLGH_SALCH</name>
<proteinExistence type="inferred from homology"/>
<keyword id="KW-0975">Bacterial flagellum</keyword>
<keyword id="KW-0998">Cell outer membrane</keyword>
<keyword id="KW-0449">Lipoprotein</keyword>
<keyword id="KW-0472">Membrane</keyword>
<keyword id="KW-0564">Palmitate</keyword>
<keyword id="KW-0732">Signal</keyword>
<feature type="signal peptide" evidence="1">
    <location>
        <begin position="1"/>
        <end position="21"/>
    </location>
</feature>
<feature type="chain" id="PRO_0000009468" description="Flagellar L-ring protein">
    <location>
        <begin position="22"/>
        <end position="232"/>
    </location>
</feature>
<feature type="lipid moiety-binding region" description="N-palmitoyl cysteine" evidence="1">
    <location>
        <position position="22"/>
    </location>
</feature>
<feature type="lipid moiety-binding region" description="S-diacylglycerol cysteine" evidence="1">
    <location>
        <position position="22"/>
    </location>
</feature>